<comment type="function">
    <text evidence="1">Self assembles to form a helical capsid wrapping up the viral genomic DNA. The capsid displays a filamentous structure with a length of 760-1950 nm and a width of 6-8 nm. The virion assembly and budding take place at the host inner membrane (By similarity).</text>
</comment>
<comment type="subunit">
    <text evidence="1">Homomultimerizes. There are several thousands of this protein in the phage capsid (By similarity).</text>
</comment>
<comment type="subcellular location">
    <subcellularLocation>
        <location evidence="4">Virion</location>
    </subcellularLocation>
    <subcellularLocation>
        <location>Host membrane</location>
        <topology>Single-pass membrane protein</topology>
    </subcellularLocation>
    <text evidence="1">prior to assembly, the major capsid protein is found associated with the bacterial host inner membrane.</text>
</comment>
<comment type="similarity">
    <text evidence="4">Belongs to the inovirus capsid protein family.</text>
</comment>
<organismHost>
    <name type="scientific">Xanthomonas campestris pv. oryzae</name>
    <dbReference type="NCBI Taxonomy" id="314227"/>
</organismHost>
<evidence type="ECO:0000250" key="1"/>
<evidence type="ECO:0000255" key="2"/>
<evidence type="ECO:0000269" key="3">
    <source>
    </source>
</evidence>
<evidence type="ECO:0000305" key="4"/>
<evidence type="ECO:0007829" key="5">
    <source>
        <dbReference type="PDB" id="2IFO"/>
    </source>
</evidence>
<protein>
    <recommendedName>
        <fullName>Capsid protein G8P</fullName>
    </recommendedName>
    <alternativeName>
        <fullName>Coat protein B</fullName>
    </alternativeName>
    <alternativeName>
        <fullName>Gene 8 protein</fullName>
        <shortName>G8P</shortName>
    </alternativeName>
    <alternativeName>
        <fullName>Major coat protein</fullName>
    </alternativeName>
</protein>
<keyword id="KW-0002">3D-structure</keyword>
<keyword id="KW-0007">Acetylation</keyword>
<keyword id="KW-0167">Capsid protein</keyword>
<keyword id="KW-0903">Direct protein sequencing</keyword>
<keyword id="KW-1139">Helical capsid protein</keyword>
<keyword id="KW-1043">Host membrane</keyword>
<keyword id="KW-0472">Membrane</keyword>
<keyword id="KW-0812">Transmembrane</keyword>
<keyword id="KW-1133">Transmembrane helix</keyword>
<keyword id="KW-0946">Virion</keyword>
<organism>
    <name type="scientific">Xanthomonas phage Xf</name>
    <name type="common">Bacteriophage Xf</name>
    <dbReference type="NCBI Taxonomy" id="356629"/>
    <lineage>
        <taxon>Viruses</taxon>
        <taxon>Monodnaviria</taxon>
        <taxon>Loebvirae</taxon>
        <taxon>Hofneiviricota</taxon>
        <taxon>Faserviricetes</taxon>
        <taxon>Tubulavirales</taxon>
        <taxon>Inoviridae</taxon>
    </lineage>
</organism>
<dbReference type="PIR" id="A04230">
    <property type="entry name" value="VCBPXF"/>
</dbReference>
<dbReference type="PDB" id="2IFO">
    <property type="method" value="Fiber"/>
    <property type="chains" value="A=5-44"/>
</dbReference>
<dbReference type="PDBsum" id="2IFO"/>
<dbReference type="SMR" id="P03622"/>
<dbReference type="iPTMnet" id="P03622"/>
<dbReference type="EvolutionaryTrace" id="P03622"/>
<dbReference type="GO" id="GO:0019029">
    <property type="term" value="C:helical viral capsid"/>
    <property type="evidence" value="ECO:0007669"/>
    <property type="project" value="UniProtKB-KW"/>
</dbReference>
<dbReference type="GO" id="GO:0033644">
    <property type="term" value="C:host cell membrane"/>
    <property type="evidence" value="ECO:0007669"/>
    <property type="project" value="UniProtKB-SubCell"/>
</dbReference>
<dbReference type="GO" id="GO:0016020">
    <property type="term" value="C:membrane"/>
    <property type="evidence" value="ECO:0007669"/>
    <property type="project" value="UniProtKB-KW"/>
</dbReference>
<dbReference type="InterPro" id="IPR008020">
    <property type="entry name" value="G8P"/>
</dbReference>
<dbReference type="Pfam" id="PF05356">
    <property type="entry name" value="Phage_Coat_B"/>
    <property type="match status" value="1"/>
</dbReference>
<dbReference type="SUPFAM" id="SSF57987">
    <property type="entry name" value="Inovirus (filamentous phage) major coat protein"/>
    <property type="match status" value="1"/>
</dbReference>
<name>CAPSD_BPXF</name>
<proteinExistence type="evidence at protein level"/>
<reference key="1">
    <citation type="journal article" date="1978" name="FEBS Lett.">
        <title>The amino acid sequence of the major coat protein subunit of the filamentous virus Xf.</title>
        <authorList>
            <person name="Frangione B."/>
            <person name="Nakashima Y."/>
            <person name="Konigsberg W."/>
            <person name="Wiseman R.L."/>
        </authorList>
    </citation>
    <scope>PROTEIN SEQUENCE</scope>
    <scope>ACETYLATION AT SER-1</scope>
</reference>
<reference key="2">
    <citation type="journal article" date="1990" name="Int. J. Biol. Macromol.">
        <title>Model-building studies of Inovirus: genetic variations on a geometric theme.</title>
        <authorList>
            <person name="Marvin D.A."/>
        </authorList>
    </citation>
    <scope>3D-STRUCTURE MODELING</scope>
</reference>
<gene>
    <name type="primary">VIII</name>
</gene>
<accession>P03622</accession>
<sequence>SGVGDGVDVVSAIEGAAGPIAAIGGAVLTVMVGIKVYKWVRRAM</sequence>
<feature type="chain" id="PRO_0000098187" description="Capsid protein G8P">
    <location>
        <begin position="1"/>
        <end position="44"/>
    </location>
</feature>
<feature type="topological domain" description="Periplasmic">
    <location>
        <begin position="1"/>
        <end position="19"/>
    </location>
</feature>
<feature type="transmembrane region" description="Helical" evidence="2">
    <location>
        <begin position="20"/>
        <end position="37"/>
    </location>
</feature>
<feature type="topological domain" description="Cytoplasmic">
    <location>
        <begin position="38"/>
        <end position="44"/>
    </location>
</feature>
<feature type="modified residue" description="N-acetylserine; by host" evidence="3">
    <location>
        <position position="1"/>
    </location>
</feature>
<feature type="non-terminal residue">
    <location>
        <position position="1"/>
    </location>
</feature>
<feature type="helix" evidence="5">
    <location>
        <begin position="6"/>
        <end position="42"/>
    </location>
</feature>